<proteinExistence type="evidence at protein level"/>
<sequence length="52" mass="5647">MEAVKEKNELFDLDVKVNAKESNDSGAEPRIASKFLCTPGCAKTGSFNSYCC</sequence>
<accession>P21838</accession>
<keyword id="KW-0044">Antibiotic</keyword>
<keyword id="KW-0929">Antimicrobial</keyword>
<keyword id="KW-0078">Bacteriocin</keyword>
<keyword id="KW-0208">D-amino acid</keyword>
<keyword id="KW-0903">Direct protein sequencing</keyword>
<keyword id="KW-0425">Lantibiotic</keyword>
<keyword id="KW-0883">Thioether bond</keyword>
<comment type="function">
    <text>Lanthionine-containing peptide antibiotic (lantibiotic) active on Gram-positive bacteria. The bactericidal activity of lantibiotics is based on depolarization of energized bacterial cytoplasmic membranes, initiated by the formation of aqueous transmembrane pores.</text>
</comment>
<comment type="PTM">
    <text>Maturation of lantibiotics involves the enzymatic conversion of Thr, and Ser into dehydrated AA and the formation of thioether bonds with cysteine. The C-terminal lanthionine undergoes decarboxylation. This is followed by membrane translocation and cleavage of the modified precursor.</text>
</comment>
<comment type="PTM">
    <text>The structure of the 2,3-didehydrobutyrine is not discussed in PubMed:1932575. However, in Fig. 5 the NMR model appears to have the Z-isomer.</text>
</comment>
<comment type="similarity">
    <text evidence="2">Belongs to the type A lantibiotic family.</text>
</comment>
<organism>
    <name type="scientific">Staphylococcus gallinarum</name>
    <dbReference type="NCBI Taxonomy" id="1293"/>
    <lineage>
        <taxon>Bacteria</taxon>
        <taxon>Bacillati</taxon>
        <taxon>Bacillota</taxon>
        <taxon>Bacilli</taxon>
        <taxon>Bacillales</taxon>
        <taxon>Staphylococcaceae</taxon>
        <taxon>Staphylococcus</taxon>
    </lineage>
</organism>
<gene>
    <name type="primary">gdmA</name>
</gene>
<feature type="propeptide" id="PRO_0000017118" evidence="1">
    <location>
        <begin position="1"/>
        <end position="30"/>
    </location>
</feature>
<feature type="peptide" id="PRO_0000017119" description="Lantibiotic gallidermin">
    <location>
        <begin position="31"/>
        <end position="52"/>
    </location>
</feature>
<feature type="modified residue" description="(Z)-2,3-didehydrobutyrine" evidence="1">
    <location>
        <position position="44"/>
    </location>
</feature>
<feature type="cross-link" description="Lanthionine (Ser-Cys)" evidence="1">
    <location>
        <begin position="33"/>
        <end position="37"/>
    </location>
</feature>
<feature type="cross-link" description="Beta-methyllanthionine (Thr-Cys)" evidence="1">
    <location>
        <begin position="38"/>
        <end position="41"/>
    </location>
</feature>
<feature type="cross-link" description="Lanthionine (Ser-Cys)" evidence="1">
    <location>
        <begin position="46"/>
        <end position="51"/>
    </location>
</feature>
<feature type="cross-link" description="S-(2-aminovinyl)-D-cysteine (Ser-Cys)" evidence="1">
    <location>
        <begin position="49"/>
        <end position="52"/>
    </location>
</feature>
<protein>
    <recommendedName>
        <fullName>Lantibiotic gallidermin</fullName>
    </recommendedName>
</protein>
<evidence type="ECO:0000269" key="1">
    <source>
    </source>
</evidence>
<evidence type="ECO:0000305" key="2"/>
<name>LANG_STAGA</name>
<dbReference type="EMBL" id="U61158">
    <property type="protein sequence ID" value="AAB61135.1"/>
    <property type="molecule type" value="Genomic_DNA"/>
</dbReference>
<dbReference type="PIR" id="A61072">
    <property type="entry name" value="EPSGD"/>
</dbReference>
<dbReference type="RefSeq" id="WP_042739435.1">
    <property type="nucleotide sequence ID" value="NZ_RXWT01000081.1"/>
</dbReference>
<dbReference type="STRING" id="1293.SH09_09605"/>
<dbReference type="TCDB" id="1.C.20.1.2">
    <property type="family name" value="the nisin (nisin) family"/>
</dbReference>
<dbReference type="OrthoDB" id="2653010at2"/>
<dbReference type="GO" id="GO:0005576">
    <property type="term" value="C:extracellular region"/>
    <property type="evidence" value="ECO:0007669"/>
    <property type="project" value="InterPro"/>
</dbReference>
<dbReference type="GO" id="GO:0005102">
    <property type="term" value="F:signaling receptor binding"/>
    <property type="evidence" value="ECO:0007669"/>
    <property type="project" value="UniProtKB-KW"/>
</dbReference>
<dbReference type="GO" id="GO:0042742">
    <property type="term" value="P:defense response to bacterium"/>
    <property type="evidence" value="ECO:0007669"/>
    <property type="project" value="UniProtKB-KW"/>
</dbReference>
<dbReference type="GO" id="GO:0031640">
    <property type="term" value="P:killing of cells of another organism"/>
    <property type="evidence" value="ECO:0007669"/>
    <property type="project" value="UniProtKB-KW"/>
</dbReference>
<dbReference type="InterPro" id="IPR006079">
    <property type="entry name" value="Lantibiotic_typ-A_Bacillales"/>
</dbReference>
<dbReference type="NCBIfam" id="NF038155">
    <property type="entry name" value="lanthi_I_FDLD"/>
    <property type="match status" value="1"/>
</dbReference>
<dbReference type="NCBIfam" id="TIGR03731">
    <property type="entry name" value="lantibio_gallid"/>
    <property type="match status" value="1"/>
</dbReference>
<dbReference type="Pfam" id="PF02052">
    <property type="entry name" value="Gallidermin"/>
    <property type="match status" value="1"/>
</dbReference>
<dbReference type="PRINTS" id="PR00323">
    <property type="entry name" value="GALLIDERMIN"/>
</dbReference>
<reference key="1">
    <citation type="journal article" date="1989" name="FEMS Microbiol. Lett.">
        <title>Structural gene isolation and prepeptide sequence of gallidermin, a new lanthionine containing antibiotic.</title>
        <authorList>
            <person name="Schnell N."/>
            <person name="Entian K.-D."/>
            <person name="Goetz F."/>
            <person name="Hoerner T."/>
            <person name="Kellner R."/>
            <person name="Jung G."/>
        </authorList>
    </citation>
    <scope>NUCLEOTIDE SEQUENCE [GENOMIC DNA]</scope>
    <source>
        <strain>TU 3928</strain>
    </source>
</reference>
<reference key="2">
    <citation type="journal article" date="1988" name="Eur. J. Biochem.">
        <title>Gallidermin: a new lanthionine-containing polypeptide antibiotic.</title>
        <authorList>
            <person name="Kellner R."/>
            <person name="Jung G."/>
            <person name="Hoerner T."/>
            <person name="Zaehner H."/>
            <person name="Schnell N."/>
            <person name="Entian K.-D."/>
            <person name="Goetz F."/>
        </authorList>
    </citation>
    <scope>PROTEIN SEQUENCE OF 31-52</scope>
    <scope>DEHYDRATION AT THR-44</scope>
    <scope>LANTHIONINE CROSS-LINKS</scope>
    <source>
        <strain>TU 3928</strain>
    </source>
</reference>
<reference key="3">
    <citation type="journal article" date="1991" name="Biopolymers">
        <title>The solution structure of the lantibiotic gallidermin.</title>
        <authorList>
            <person name="Freund S."/>
            <person name="Jung G."/>
            <person name="Gutbrod O."/>
            <person name="Folkers G."/>
            <person name="Gibbons W.A."/>
            <person name="Allgaier H."/>
            <person name="Werner R."/>
        </authorList>
    </citation>
    <scope>STRUCTURE BY NMR</scope>
</reference>